<protein>
    <recommendedName>
        <fullName>Mediator of RNA polymerase II transcription subunit 6</fullName>
    </recommendedName>
    <alternativeName>
        <fullName>CeMED6</fullName>
    </alternativeName>
    <alternativeName>
        <fullName>Mediator complex subunit 6</fullName>
    </alternativeName>
    <alternativeName>
        <fullName>c-MED6</fullName>
        <shortName>MED-6</shortName>
    </alternativeName>
</protein>
<keyword id="KW-0010">Activator</keyword>
<keyword id="KW-0217">Developmental protein</keyword>
<keyword id="KW-0539">Nucleus</keyword>
<keyword id="KW-1185">Reference proteome</keyword>
<keyword id="KW-0804">Transcription</keyword>
<keyword id="KW-0805">Transcription regulation</keyword>
<gene>
    <name type="primary">mdt-6</name>
    <name type="synonym">med-6</name>
    <name type="ORF">Y57E12AL.5</name>
</gene>
<dbReference type="EMBL" id="FO081184">
    <property type="protein sequence ID" value="CCD69750.1"/>
    <property type="molecule type" value="Genomic_DNA"/>
</dbReference>
<dbReference type="EMBL" id="U78081">
    <property type="protein sequence ID" value="AAB84362.1"/>
    <property type="status" value="ALT_INIT"/>
    <property type="molecule type" value="mRNA"/>
</dbReference>
<dbReference type="PIR" id="T37473">
    <property type="entry name" value="T37473"/>
</dbReference>
<dbReference type="RefSeq" id="NP_504791.3">
    <property type="nucleotide sequence ID" value="NM_072390.4"/>
</dbReference>
<dbReference type="SMR" id="Q9N337"/>
<dbReference type="BioGRID" id="44136">
    <property type="interactions" value="4"/>
</dbReference>
<dbReference type="FunCoup" id="Q9N337">
    <property type="interactions" value="2726"/>
</dbReference>
<dbReference type="IntAct" id="Q9N337">
    <property type="interactions" value="4"/>
</dbReference>
<dbReference type="STRING" id="6239.Y57E12AL.5.1"/>
<dbReference type="PaxDb" id="6239-Y57E12AL.5"/>
<dbReference type="PeptideAtlas" id="Q9N337"/>
<dbReference type="EnsemblMetazoa" id="Y57E12AL.5.1">
    <property type="protein sequence ID" value="Y57E12AL.5.1"/>
    <property type="gene ID" value="WBGene00003164"/>
</dbReference>
<dbReference type="GeneID" id="179091"/>
<dbReference type="KEGG" id="cel:CELE_Y57E12AL.5"/>
<dbReference type="UCSC" id="Y57E12AL.5">
    <property type="organism name" value="c. elegans"/>
</dbReference>
<dbReference type="AGR" id="WB:WBGene00003164"/>
<dbReference type="CTD" id="179091"/>
<dbReference type="WormBase" id="Y57E12AL.5">
    <property type="protein sequence ID" value="CE25510"/>
    <property type="gene ID" value="WBGene00003164"/>
    <property type="gene designation" value="mdt-6"/>
</dbReference>
<dbReference type="eggNOG" id="KOG3169">
    <property type="taxonomic scope" value="Eukaryota"/>
</dbReference>
<dbReference type="GeneTree" id="ENSGT00390000017666"/>
<dbReference type="HOGENOM" id="CLU_077754_1_1_1"/>
<dbReference type="InParanoid" id="Q9N337"/>
<dbReference type="OMA" id="FYEMNSC"/>
<dbReference type="OrthoDB" id="344220at2759"/>
<dbReference type="PhylomeDB" id="Q9N337"/>
<dbReference type="PRO" id="PR:Q9N337"/>
<dbReference type="Proteomes" id="UP000001940">
    <property type="component" value="Chromosome V"/>
</dbReference>
<dbReference type="Bgee" id="WBGene00003164">
    <property type="expression patterns" value="Expressed in germ line (C elegans) and 4 other cell types or tissues"/>
</dbReference>
<dbReference type="GO" id="GO:0070847">
    <property type="term" value="C:core mediator complex"/>
    <property type="evidence" value="ECO:0000318"/>
    <property type="project" value="GO_Central"/>
</dbReference>
<dbReference type="GO" id="GO:0016592">
    <property type="term" value="C:mediator complex"/>
    <property type="evidence" value="ECO:0000318"/>
    <property type="project" value="GO_Central"/>
</dbReference>
<dbReference type="GO" id="GO:0003713">
    <property type="term" value="F:transcription coactivator activity"/>
    <property type="evidence" value="ECO:0000318"/>
    <property type="project" value="GO_Central"/>
</dbReference>
<dbReference type="GO" id="GO:0006357">
    <property type="term" value="P:regulation of transcription by RNA polymerase II"/>
    <property type="evidence" value="ECO:0000318"/>
    <property type="project" value="GO_Central"/>
</dbReference>
<dbReference type="Gene3D" id="3.10.450.580">
    <property type="entry name" value="Mediator complex, subunit Med6"/>
    <property type="match status" value="1"/>
</dbReference>
<dbReference type="InterPro" id="IPR007018">
    <property type="entry name" value="Mediator_Med6"/>
</dbReference>
<dbReference type="InterPro" id="IPR016820">
    <property type="entry name" value="Mediator_Med6_met/pln"/>
</dbReference>
<dbReference type="InterPro" id="IPR038566">
    <property type="entry name" value="Mediator_Med6_sf"/>
</dbReference>
<dbReference type="PANTHER" id="PTHR13104">
    <property type="entry name" value="MED-6-RELATED"/>
    <property type="match status" value="1"/>
</dbReference>
<dbReference type="Pfam" id="PF04934">
    <property type="entry name" value="Med6"/>
    <property type="match status" value="1"/>
</dbReference>
<dbReference type="PIRSF" id="PIRSF023869">
    <property type="entry name" value="Mediator_MED6_meta/pln"/>
    <property type="match status" value="1"/>
</dbReference>
<comment type="function">
    <text evidence="1 4 5 6">Component of the Mediator complex, a coactivator involved in the regulated transcription of nearly all RNA polymerase II-dependent genes. Mediator functions as a bridge to convey information from gene-specific regulatory proteins to the basal RNA polymerase II transcription machinery. Mediator is recruited to promoters by direct interactions with regulatory proteins and serves as a scaffold for the assembly of a functional preinitiation complex with RNA polymerase II and the general transcription factors (By similarity). Acts to repress beta-catenin target genes. Required for asymmetric division of T-cells and for gonad and germ cell development.</text>
</comment>
<comment type="subunit">
    <text evidence="2 4 6 7">Component of the Mediator complex (By similarity). Interacts with let-19/mdt-13 (PubMed:15790964). Interacts with RNA polymerase II (PubMed:10611325). Interacts with mdt-28 (PubMed:28603670).</text>
</comment>
<comment type="interaction">
    <interactant intactId="EBI-1533827">
        <id>Q9N337</id>
    </interactant>
    <interactant intactId="EBI-1533906">
        <id>P16356</id>
        <label>ama-1</label>
    </interactant>
    <organismsDiffer>false</organismsDiffer>
    <experiments>2</experiments>
</comment>
<comment type="subcellular location">
    <subcellularLocation>
        <location evidence="1">Nucleus</location>
    </subcellularLocation>
</comment>
<comment type="similarity">
    <text evidence="8">Belongs to the Mediator complex subunit 6 family.</text>
</comment>
<comment type="sequence caution" evidence="8">
    <conflict type="erroneous initiation">
        <sequence resource="EMBL-CDS" id="AAB84362"/>
    </conflict>
</comment>
<feature type="chain" id="PRO_0000303047" description="Mediator of RNA polymerase II transcription subunit 6">
    <location>
        <begin position="1"/>
        <end position="250"/>
    </location>
</feature>
<feature type="region of interest" description="Disordered" evidence="3">
    <location>
        <begin position="166"/>
        <end position="250"/>
    </location>
</feature>
<feature type="compositionally biased region" description="Acidic residues" evidence="3">
    <location>
        <begin position="204"/>
        <end position="223"/>
    </location>
</feature>
<feature type="compositionally biased region" description="Basic and acidic residues" evidence="3">
    <location>
        <begin position="224"/>
        <end position="239"/>
    </location>
</feature>
<evidence type="ECO:0000250" key="1"/>
<evidence type="ECO:0000250" key="2">
    <source>
        <dbReference type="UniProtKB" id="O75586"/>
    </source>
</evidence>
<evidence type="ECO:0000256" key="3">
    <source>
        <dbReference type="SAM" id="MobiDB-lite"/>
    </source>
</evidence>
<evidence type="ECO:0000269" key="4">
    <source>
    </source>
</evidence>
<evidence type="ECO:0000269" key="5">
    <source>
    </source>
</evidence>
<evidence type="ECO:0000269" key="6">
    <source>
    </source>
</evidence>
<evidence type="ECO:0000269" key="7">
    <source>
    </source>
</evidence>
<evidence type="ECO:0000305" key="8"/>
<organism>
    <name type="scientific">Caenorhabditis elegans</name>
    <dbReference type="NCBI Taxonomy" id="6239"/>
    <lineage>
        <taxon>Eukaryota</taxon>
        <taxon>Metazoa</taxon>
        <taxon>Ecdysozoa</taxon>
        <taxon>Nematoda</taxon>
        <taxon>Chromadorea</taxon>
        <taxon>Rhabditida</taxon>
        <taxon>Rhabditina</taxon>
        <taxon>Rhabditomorpha</taxon>
        <taxon>Rhabditoidea</taxon>
        <taxon>Rhabditidae</taxon>
        <taxon>Peloderinae</taxon>
        <taxon>Caenorhabditis</taxon>
    </lineage>
</organism>
<reference key="1">
    <citation type="journal article" date="1998" name="Science">
        <title>Genome sequence of the nematode C. elegans: a platform for investigating biology.</title>
        <authorList>
            <consortium name="The C. elegans sequencing consortium"/>
        </authorList>
    </citation>
    <scope>NUCLEOTIDE SEQUENCE [LARGE SCALE GENOMIC DNA]</scope>
    <source>
        <strain>Bristol N2</strain>
    </source>
</reference>
<reference key="2">
    <citation type="journal article" date="1997" name="Mol. Cell. Biol.">
        <title>A transcriptional mediator protein that is required for activation of many RNA polymerase II promoters and is conserved from yeast to humans.</title>
        <authorList>
            <person name="Lee Y.C."/>
            <person name="Min S."/>
            <person name="Gim B.S."/>
            <person name="Kim Y.-J."/>
        </authorList>
    </citation>
    <scope>NUCLEOTIDE SEQUENCE [MRNA] OF 4-250</scope>
</reference>
<reference key="3">
    <citation type="journal article" date="1999" name="Proc. Natl. Acad. Sci. U.S.A.">
        <title>Caenorhabditis elegans mediator complexes are required for developmental-specific transcriptional activation.</title>
        <authorList>
            <person name="Kwon J.Y."/>
            <person name="Park J.M."/>
            <person name="Gim B.S."/>
            <person name="Han S.J."/>
            <person name="Lee J."/>
            <person name="Kim Y.-J."/>
        </authorList>
    </citation>
    <scope>FUNCTION</scope>
    <scope>INTERACTION WITH RNA POLYMERASE II</scope>
    <scope>SUBCELLULAR LOCATION</scope>
</reference>
<reference key="4">
    <citation type="journal article" date="2001" name="FEBS Lett.">
        <title>The MED-7 transcriptional mediator encoded by let-49 is required for gonad and germ cell development in Caenorhabditis elegans.</title>
        <authorList>
            <person name="Kwon J.Y."/>
            <person name="Kim-Ha J."/>
            <person name="Lee B.J."/>
            <person name="Lee J."/>
        </authorList>
    </citation>
    <scope>FUNCTION</scope>
</reference>
<reference key="5">
    <citation type="journal article" date="2005" name="Development">
        <title>Components of the transcriptional Mediator complex are required for asymmetric cell division in C. elegans.</title>
        <authorList>
            <person name="Yoda A."/>
            <person name="Kouike H."/>
            <person name="Okano H."/>
            <person name="Sawa H."/>
        </authorList>
    </citation>
    <scope>FUNCTION</scope>
    <scope>INTERACTION WITH LET-19</scope>
</reference>
<reference key="6">
    <citation type="journal article" date="2017" name="PeerJ">
        <title>The nematode homologue of Mediator complex subunit 28, F28F8.5, is a critical regulator of C. elegans development.</title>
        <authorList>
            <person name="Kostrouchova M."/>
            <person name="Kostrouch D."/>
            <person name="Chughtai A.A."/>
            <person name="Kassak F."/>
            <person name="Novotny J.P."/>
            <person name="Kostrouchova V."/>
            <person name="Benda A."/>
            <person name="Krause M.W."/>
            <person name="Saudek V."/>
            <person name="Kostrouchova M."/>
            <person name="Kostrouch Z."/>
        </authorList>
    </citation>
    <scope>INTERACTION WITH MDT-28</scope>
</reference>
<proteinExistence type="evidence at protein level"/>
<accession>Q9N337</accession>
<accession>O18534</accession>
<name>MED6_CAEEL</name>
<sequence>MMPRMGPPAAARQDNPLHVSFRNPQWPPNFINKDNVLDYFCNQANAFYEMNSCNQQIRMQNIVNRTVEECLRTMPGIQYVLWYSQPPLFIICKQRRNNVTNVSPIAYYYVINGSVHQAPDMYSLVQSRLLGALEPLRNAFGEVTNYSRYNTAKGYYWEFKNKPNVKKREEEKKEDEEEKLEDRSTNFQKTRTMMLLNQLFSEMPAEDALEREEKEEVEEEEEETLKTEEPTTSTDEPKFAEPTARTTSKQ</sequence>